<dbReference type="EMBL" id="CP000926">
    <property type="protein sequence ID" value="ABZ01319.1"/>
    <property type="molecule type" value="Genomic_DNA"/>
</dbReference>
<dbReference type="RefSeq" id="WP_003260030.1">
    <property type="nucleotide sequence ID" value="NC_010322.1"/>
</dbReference>
<dbReference type="SMR" id="B0KRB4"/>
<dbReference type="GeneID" id="97170746"/>
<dbReference type="KEGG" id="ppg:PputGB1_5437"/>
<dbReference type="eggNOG" id="COG0356">
    <property type="taxonomic scope" value="Bacteria"/>
</dbReference>
<dbReference type="HOGENOM" id="CLU_041018_1_0_6"/>
<dbReference type="Proteomes" id="UP000002157">
    <property type="component" value="Chromosome"/>
</dbReference>
<dbReference type="GO" id="GO:0005886">
    <property type="term" value="C:plasma membrane"/>
    <property type="evidence" value="ECO:0007669"/>
    <property type="project" value="UniProtKB-SubCell"/>
</dbReference>
<dbReference type="GO" id="GO:0045259">
    <property type="term" value="C:proton-transporting ATP synthase complex"/>
    <property type="evidence" value="ECO:0007669"/>
    <property type="project" value="UniProtKB-KW"/>
</dbReference>
<dbReference type="GO" id="GO:0046933">
    <property type="term" value="F:proton-transporting ATP synthase activity, rotational mechanism"/>
    <property type="evidence" value="ECO:0007669"/>
    <property type="project" value="UniProtKB-UniRule"/>
</dbReference>
<dbReference type="GO" id="GO:0042777">
    <property type="term" value="P:proton motive force-driven plasma membrane ATP synthesis"/>
    <property type="evidence" value="ECO:0007669"/>
    <property type="project" value="TreeGrafter"/>
</dbReference>
<dbReference type="CDD" id="cd00310">
    <property type="entry name" value="ATP-synt_Fo_a_6"/>
    <property type="match status" value="1"/>
</dbReference>
<dbReference type="FunFam" id="1.20.120.220:FF:000002">
    <property type="entry name" value="ATP synthase subunit a"/>
    <property type="match status" value="1"/>
</dbReference>
<dbReference type="Gene3D" id="1.20.120.220">
    <property type="entry name" value="ATP synthase, F0 complex, subunit A"/>
    <property type="match status" value="1"/>
</dbReference>
<dbReference type="HAMAP" id="MF_01393">
    <property type="entry name" value="ATP_synth_a_bact"/>
    <property type="match status" value="1"/>
</dbReference>
<dbReference type="InterPro" id="IPR045082">
    <property type="entry name" value="ATP_syn_F0_a_bact/chloroplast"/>
</dbReference>
<dbReference type="InterPro" id="IPR000568">
    <property type="entry name" value="ATP_synth_F0_asu"/>
</dbReference>
<dbReference type="InterPro" id="IPR023011">
    <property type="entry name" value="ATP_synth_F0_asu_AS"/>
</dbReference>
<dbReference type="InterPro" id="IPR035908">
    <property type="entry name" value="F0_ATP_A_sf"/>
</dbReference>
<dbReference type="NCBIfam" id="TIGR01131">
    <property type="entry name" value="ATP_synt_6_or_A"/>
    <property type="match status" value="1"/>
</dbReference>
<dbReference type="NCBIfam" id="NF004477">
    <property type="entry name" value="PRK05815.1-1"/>
    <property type="match status" value="1"/>
</dbReference>
<dbReference type="PANTHER" id="PTHR42823">
    <property type="entry name" value="ATP SYNTHASE SUBUNIT A, CHLOROPLASTIC"/>
    <property type="match status" value="1"/>
</dbReference>
<dbReference type="PANTHER" id="PTHR42823:SF3">
    <property type="entry name" value="ATP SYNTHASE SUBUNIT A, CHLOROPLASTIC"/>
    <property type="match status" value="1"/>
</dbReference>
<dbReference type="Pfam" id="PF00119">
    <property type="entry name" value="ATP-synt_A"/>
    <property type="match status" value="1"/>
</dbReference>
<dbReference type="SUPFAM" id="SSF81336">
    <property type="entry name" value="F1F0 ATP synthase subunit A"/>
    <property type="match status" value="1"/>
</dbReference>
<dbReference type="PROSITE" id="PS00449">
    <property type="entry name" value="ATPASE_A"/>
    <property type="match status" value="1"/>
</dbReference>
<comment type="function">
    <text evidence="1">Key component of the proton channel; it plays a direct role in the translocation of protons across the membrane.</text>
</comment>
<comment type="subunit">
    <text evidence="1">F-type ATPases have 2 components, CF(1) - the catalytic core - and CF(0) - the membrane proton channel. CF(1) has five subunits: alpha(3), beta(3), gamma(1), delta(1), epsilon(1). CF(0) has three main subunits: a(1), b(2) and c(9-12). The alpha and beta chains form an alternating ring which encloses part of the gamma chain. CF(1) is attached to CF(0) by a central stalk formed by the gamma and epsilon chains, while a peripheral stalk is formed by the delta and b chains.</text>
</comment>
<comment type="subcellular location">
    <subcellularLocation>
        <location evidence="1">Cell inner membrane</location>
        <topology evidence="1">Multi-pass membrane protein</topology>
    </subcellularLocation>
</comment>
<comment type="similarity">
    <text evidence="1">Belongs to the ATPase A chain family.</text>
</comment>
<reference key="1">
    <citation type="submission" date="2008-01" db="EMBL/GenBank/DDBJ databases">
        <title>Complete sequence of Pseudomonas putida GB-1.</title>
        <authorList>
            <consortium name="US DOE Joint Genome Institute"/>
            <person name="Copeland A."/>
            <person name="Lucas S."/>
            <person name="Lapidus A."/>
            <person name="Barry K."/>
            <person name="Glavina del Rio T."/>
            <person name="Dalin E."/>
            <person name="Tice H."/>
            <person name="Pitluck S."/>
            <person name="Bruce D."/>
            <person name="Goodwin L."/>
            <person name="Chertkov O."/>
            <person name="Brettin T."/>
            <person name="Detter J.C."/>
            <person name="Han C."/>
            <person name="Kuske C.R."/>
            <person name="Schmutz J."/>
            <person name="Larimer F."/>
            <person name="Land M."/>
            <person name="Hauser L."/>
            <person name="Kyrpides N."/>
            <person name="Kim E."/>
            <person name="McCarthy J.K."/>
            <person name="Richardson P."/>
        </authorList>
    </citation>
    <scope>NUCLEOTIDE SEQUENCE [LARGE SCALE GENOMIC DNA]</scope>
    <source>
        <strain>GB-1</strain>
    </source>
</reference>
<sequence>MAAETASGYIQHHLQNLTYGQLPDGSWGFAHSAAEAKAMGFWAFHLDTLGWSVALGLIFLFIFRMAAKKATSGQPGGLQNFVEVMVDFVNGSVKDSFHGRSPVIAPLALTIFVWVFLMNAVDLVPVDWIPQLAILISGDPHIPFRAVSTTDPNATLAMAFCVFALIIFYSIKVKGLGGFIGELTLHPFGSKNIFVQILLIPVNFLLEFVTLIAKPISLALRLFGNMYAGELVFILIAVMFGSGLLWLSGLGVVLQWAWAVFHILIITLQAFIFMMLTIVYLSMAHEDNH</sequence>
<name>ATP6_PSEPG</name>
<protein>
    <recommendedName>
        <fullName evidence="1">ATP synthase subunit a</fullName>
    </recommendedName>
    <alternativeName>
        <fullName evidence="1">ATP synthase F0 sector subunit a</fullName>
    </alternativeName>
    <alternativeName>
        <fullName evidence="1">F-ATPase subunit 6</fullName>
    </alternativeName>
</protein>
<gene>
    <name evidence="1" type="primary">atpB</name>
    <name type="ordered locus">PputGB1_5437</name>
</gene>
<proteinExistence type="inferred from homology"/>
<keyword id="KW-0066">ATP synthesis</keyword>
<keyword id="KW-0997">Cell inner membrane</keyword>
<keyword id="KW-1003">Cell membrane</keyword>
<keyword id="KW-0138">CF(0)</keyword>
<keyword id="KW-0375">Hydrogen ion transport</keyword>
<keyword id="KW-0406">Ion transport</keyword>
<keyword id="KW-0472">Membrane</keyword>
<keyword id="KW-0812">Transmembrane</keyword>
<keyword id="KW-1133">Transmembrane helix</keyword>
<keyword id="KW-0813">Transport</keyword>
<organism>
    <name type="scientific">Pseudomonas putida (strain GB-1)</name>
    <dbReference type="NCBI Taxonomy" id="76869"/>
    <lineage>
        <taxon>Bacteria</taxon>
        <taxon>Pseudomonadati</taxon>
        <taxon>Pseudomonadota</taxon>
        <taxon>Gammaproteobacteria</taxon>
        <taxon>Pseudomonadales</taxon>
        <taxon>Pseudomonadaceae</taxon>
        <taxon>Pseudomonas</taxon>
    </lineage>
</organism>
<feature type="chain" id="PRO_0000362397" description="ATP synthase subunit a">
    <location>
        <begin position="1"/>
        <end position="289"/>
    </location>
</feature>
<feature type="transmembrane region" description="Helical" evidence="1">
    <location>
        <begin position="43"/>
        <end position="63"/>
    </location>
</feature>
<feature type="transmembrane region" description="Helical" evidence="1">
    <location>
        <begin position="103"/>
        <end position="123"/>
    </location>
</feature>
<feature type="transmembrane region" description="Helical" evidence="1">
    <location>
        <begin position="160"/>
        <end position="180"/>
    </location>
</feature>
<feature type="transmembrane region" description="Helical" evidence="1">
    <location>
        <begin position="193"/>
        <end position="213"/>
    </location>
</feature>
<feature type="transmembrane region" description="Helical" evidence="1">
    <location>
        <begin position="232"/>
        <end position="252"/>
    </location>
</feature>
<feature type="transmembrane region" description="Helical" evidence="1">
    <location>
        <begin position="259"/>
        <end position="279"/>
    </location>
</feature>
<evidence type="ECO:0000255" key="1">
    <source>
        <dbReference type="HAMAP-Rule" id="MF_01393"/>
    </source>
</evidence>
<accession>B0KRB4</accession>